<proteinExistence type="inferred from homology"/>
<reference key="1">
    <citation type="submission" date="2006-03" db="EMBL/GenBank/DDBJ databases">
        <title>Complete sequence of Rhodopseudomonas palustris BisB5.</title>
        <authorList>
            <consortium name="US DOE Joint Genome Institute"/>
            <person name="Copeland A."/>
            <person name="Lucas S."/>
            <person name="Lapidus A."/>
            <person name="Barry K."/>
            <person name="Detter J.C."/>
            <person name="Glavina del Rio T."/>
            <person name="Hammon N."/>
            <person name="Israni S."/>
            <person name="Dalin E."/>
            <person name="Tice H."/>
            <person name="Pitluck S."/>
            <person name="Chain P."/>
            <person name="Malfatti S."/>
            <person name="Shin M."/>
            <person name="Vergez L."/>
            <person name="Schmutz J."/>
            <person name="Larimer F."/>
            <person name="Land M."/>
            <person name="Hauser L."/>
            <person name="Pelletier D.A."/>
            <person name="Kyrpides N."/>
            <person name="Lykidis A."/>
            <person name="Oda Y."/>
            <person name="Harwood C.S."/>
            <person name="Richardson P."/>
        </authorList>
    </citation>
    <scope>NUCLEOTIDE SEQUENCE [LARGE SCALE GENOMIC DNA]</scope>
    <source>
        <strain>BisB5</strain>
    </source>
</reference>
<protein>
    <recommendedName>
        <fullName evidence="1">Phosphate acyltransferase</fullName>
        <ecNumber evidence="1">2.3.1.274</ecNumber>
    </recommendedName>
    <alternativeName>
        <fullName evidence="1">Acyl-ACP phosphotransacylase</fullName>
    </alternativeName>
    <alternativeName>
        <fullName evidence="1">Acyl-[acyl-carrier-protein]--phosphate acyltransferase</fullName>
    </alternativeName>
    <alternativeName>
        <fullName evidence="1">Phosphate-acyl-ACP acyltransferase</fullName>
    </alternativeName>
</protein>
<keyword id="KW-0963">Cytoplasm</keyword>
<keyword id="KW-0444">Lipid biosynthesis</keyword>
<keyword id="KW-0443">Lipid metabolism</keyword>
<keyword id="KW-0594">Phospholipid biosynthesis</keyword>
<keyword id="KW-1208">Phospholipid metabolism</keyword>
<keyword id="KW-0808">Transferase</keyword>
<sequence>MPQKVRIALDAMGGDFGPSVVIPGAAIALGRHPDAEFLLFGDSALIDKELAAHPALKKVSRVVHTDVAVSMHDKPSQALRRGRKVSSMWLAIEAVKKGEADVAVSAGNTGALMAMARFCLRTLPGIDRPAIAATWPTVRGDSVVLDLGATIGGDAAHLKALAVMGAAMASVLFDLERPTVGLLNIGVEEIKGGEEIREAAELLRAMQSPPFEFIGFVEGDGIGSGAADVIVSEGFSGNIALKAAEGTARQIIQLLRDAMSRTWSAKIGYLFARGAFRALRDKIDPNKSNGGVFLGLNGIVVKSHGGTNADGFAYAVDVSYDMVRYDLLTKINQTLNRETGALVSTPSAQEAVS</sequence>
<comment type="function">
    <text evidence="1">Catalyzes the reversible formation of acyl-phosphate (acyl-PO(4)) from acyl-[acyl-carrier-protein] (acyl-ACP). This enzyme utilizes acyl-ACP as fatty acyl donor, but not acyl-CoA.</text>
</comment>
<comment type="catalytic activity">
    <reaction evidence="1">
        <text>a fatty acyl-[ACP] + phosphate = an acyl phosphate + holo-[ACP]</text>
        <dbReference type="Rhea" id="RHEA:42292"/>
        <dbReference type="Rhea" id="RHEA-COMP:9685"/>
        <dbReference type="Rhea" id="RHEA-COMP:14125"/>
        <dbReference type="ChEBI" id="CHEBI:43474"/>
        <dbReference type="ChEBI" id="CHEBI:59918"/>
        <dbReference type="ChEBI" id="CHEBI:64479"/>
        <dbReference type="ChEBI" id="CHEBI:138651"/>
        <dbReference type="EC" id="2.3.1.274"/>
    </reaction>
</comment>
<comment type="pathway">
    <text evidence="1">Lipid metabolism; phospholipid metabolism.</text>
</comment>
<comment type="subunit">
    <text evidence="1">Homodimer. Probably interacts with PlsY.</text>
</comment>
<comment type="subcellular location">
    <subcellularLocation>
        <location evidence="1">Cytoplasm</location>
    </subcellularLocation>
    <text evidence="1">Associated with the membrane possibly through PlsY.</text>
</comment>
<comment type="similarity">
    <text evidence="1">Belongs to the PlsX family.</text>
</comment>
<name>PLSX_RHOPS</name>
<evidence type="ECO:0000255" key="1">
    <source>
        <dbReference type="HAMAP-Rule" id="MF_00019"/>
    </source>
</evidence>
<accession>Q136S5</accession>
<gene>
    <name evidence="1" type="primary">plsX</name>
    <name type="ordered locus">RPD_2685</name>
</gene>
<feature type="chain" id="PRO_1000001815" description="Phosphate acyltransferase">
    <location>
        <begin position="1"/>
        <end position="353"/>
    </location>
</feature>
<dbReference type="EC" id="2.3.1.274" evidence="1"/>
<dbReference type="EMBL" id="CP000283">
    <property type="protein sequence ID" value="ABE39914.1"/>
    <property type="molecule type" value="Genomic_DNA"/>
</dbReference>
<dbReference type="SMR" id="Q136S5"/>
<dbReference type="STRING" id="316057.RPD_2685"/>
<dbReference type="KEGG" id="rpd:RPD_2685"/>
<dbReference type="eggNOG" id="COG0416">
    <property type="taxonomic scope" value="Bacteria"/>
</dbReference>
<dbReference type="HOGENOM" id="CLU_039379_1_0_5"/>
<dbReference type="BioCyc" id="RPAL316057:RPD_RS13500-MONOMER"/>
<dbReference type="UniPathway" id="UPA00085"/>
<dbReference type="Proteomes" id="UP000001818">
    <property type="component" value="Chromosome"/>
</dbReference>
<dbReference type="GO" id="GO:0005737">
    <property type="term" value="C:cytoplasm"/>
    <property type="evidence" value="ECO:0007669"/>
    <property type="project" value="UniProtKB-SubCell"/>
</dbReference>
<dbReference type="GO" id="GO:0043811">
    <property type="term" value="F:phosphate:acyl-[acyl carrier protein] acyltransferase activity"/>
    <property type="evidence" value="ECO:0007669"/>
    <property type="project" value="UniProtKB-UniRule"/>
</dbReference>
<dbReference type="GO" id="GO:0006633">
    <property type="term" value="P:fatty acid biosynthetic process"/>
    <property type="evidence" value="ECO:0007669"/>
    <property type="project" value="UniProtKB-UniRule"/>
</dbReference>
<dbReference type="GO" id="GO:0008654">
    <property type="term" value="P:phospholipid biosynthetic process"/>
    <property type="evidence" value="ECO:0007669"/>
    <property type="project" value="UniProtKB-KW"/>
</dbReference>
<dbReference type="Gene3D" id="3.40.718.10">
    <property type="entry name" value="Isopropylmalate Dehydrogenase"/>
    <property type="match status" value="1"/>
</dbReference>
<dbReference type="HAMAP" id="MF_00019">
    <property type="entry name" value="PlsX"/>
    <property type="match status" value="1"/>
</dbReference>
<dbReference type="InterPro" id="IPR003664">
    <property type="entry name" value="FA_synthesis"/>
</dbReference>
<dbReference type="InterPro" id="IPR012281">
    <property type="entry name" value="Phospholipid_synth_PlsX-like"/>
</dbReference>
<dbReference type="NCBIfam" id="TIGR00182">
    <property type="entry name" value="plsX"/>
    <property type="match status" value="1"/>
</dbReference>
<dbReference type="PANTHER" id="PTHR30100">
    <property type="entry name" value="FATTY ACID/PHOSPHOLIPID SYNTHESIS PROTEIN PLSX"/>
    <property type="match status" value="1"/>
</dbReference>
<dbReference type="PANTHER" id="PTHR30100:SF1">
    <property type="entry name" value="PHOSPHATE ACYLTRANSFERASE"/>
    <property type="match status" value="1"/>
</dbReference>
<dbReference type="Pfam" id="PF02504">
    <property type="entry name" value="FA_synthesis"/>
    <property type="match status" value="1"/>
</dbReference>
<dbReference type="PIRSF" id="PIRSF002465">
    <property type="entry name" value="Phsphlp_syn_PlsX"/>
    <property type="match status" value="1"/>
</dbReference>
<dbReference type="SUPFAM" id="SSF53659">
    <property type="entry name" value="Isocitrate/Isopropylmalate dehydrogenase-like"/>
    <property type="match status" value="1"/>
</dbReference>
<organism>
    <name type="scientific">Rhodopseudomonas palustris (strain BisB5)</name>
    <dbReference type="NCBI Taxonomy" id="316057"/>
    <lineage>
        <taxon>Bacteria</taxon>
        <taxon>Pseudomonadati</taxon>
        <taxon>Pseudomonadota</taxon>
        <taxon>Alphaproteobacteria</taxon>
        <taxon>Hyphomicrobiales</taxon>
        <taxon>Nitrobacteraceae</taxon>
        <taxon>Rhodopseudomonas</taxon>
    </lineage>
</organism>